<evidence type="ECO:0000255" key="1"/>
<evidence type="ECO:0000255" key="2">
    <source>
        <dbReference type="PROSITE-ProRule" id="PRU00441"/>
    </source>
</evidence>
<evidence type="ECO:0000269" key="3">
    <source>
    </source>
</evidence>
<evidence type="ECO:0000303" key="4">
    <source>
    </source>
</evidence>
<evidence type="ECO:0000305" key="5"/>
<evidence type="ECO:0000305" key="6">
    <source>
    </source>
</evidence>
<evidence type="ECO:0000312" key="7">
    <source>
        <dbReference type="EMBL" id="AAZ22100.1"/>
    </source>
</evidence>
<accession>Q4FL38</accession>
<protein>
    <recommendedName>
        <fullName evidence="5">Trimethylamine N-oxide transport system permease protein TmoV</fullName>
        <shortName evidence="5">TMAO transport system permease protein TmoV</shortName>
    </recommendedName>
</protein>
<proteinExistence type="evidence at protein level"/>
<gene>
    <name evidence="4" type="primary">tmoV</name>
    <name evidence="7" type="ordered locus">SAR11_1297</name>
</gene>
<sequence length="717" mass="80320">MELLKKYPKFFQWLFLLIVFFSLCFAIEVPETYNFIRGQAEFIKDPNQSTYTLFGAEVRYYAFDVFWRLPPLLGWLPIWINDSLFFLMNEWMPMEFWNEDIQEFRTQPLLLQITRNLTSFMTFLIELIREILLGGVETIVSFSSWDWIDANPWAELPGLPWTIVTAGAVILGYKLSGKGLALFAGLVMIYISVFGQWKPSMQTLSFILVAAPLSFLFGLTFGVMAFKSKRVEKFLYPILLVMQTMPQYAVLVPAIVLFGIGDHAAVIITMVVAVPPMILLTLLGLRGIPSEVIEAGRMSGCNNWQLMTKVLIPTARRDILIGVNQVIMVCFSMAVISAFIGAKGLGFNLLLALNQLNIGLALEAGLCISLIAILLDKMSLAWANKQIDYFGNLTYFQRNKNILFFAAAVILGIIFSYLGSFYFKDGSNYLFEVPHNKGISTADFWNKGVDWIWDTFFHTLKIFNTWLIVDVLQPMRALYLRMPAVATLVLVIGAGYIIGGIRSALVVGGLTLFIALSPWWDRALVTLYMATFGVFISTIIGFTVGIISFQNKHTANFMLGVCDIFQTFPSFVYLIPVMMLFGVTDTSVLIAVIVYATIPATRYTIEGLRSVPEALHDAATMSGVNKVQRLLKIEFPLAFPHMMLGLNQTIVFALFMVIIGAFIGTEDLGQYILKALSDKKGAGIGLTLGLCVAFIGLIFDHLIRTWVGKRKKHLGIG</sequence>
<reference key="1">
    <citation type="journal article" date="2005" name="Science">
        <title>Genome streamlining in a cosmopolitan oceanic bacterium.</title>
        <authorList>
            <person name="Giovannoni S.J."/>
            <person name="Tripp H.J."/>
            <person name="Givan S."/>
            <person name="Podar M."/>
            <person name="Vergin K.L."/>
            <person name="Baptista D."/>
            <person name="Bibbs L."/>
            <person name="Eads J."/>
            <person name="Richardson T.H."/>
            <person name="Noordewier M."/>
            <person name="Rappe M.S."/>
            <person name="Short J.M."/>
            <person name="Carrington J.C."/>
            <person name="Mathur E.J."/>
        </authorList>
    </citation>
    <scope>NUCLEOTIDE SEQUENCE [LARGE SCALE GENOMIC DNA]</scope>
    <source>
        <strain>HTCC1062</strain>
    </source>
</reference>
<reference key="2">
    <citation type="journal article" date="2022" name="Front. Microbiol.">
        <title>Characterization of the trimethylamine N-oxide transporter from Pelagibacter strain HTCC1062 reveals its oligotrophic niche adaption.</title>
        <authorList>
            <person name="Gao C."/>
            <person name="Zhang N."/>
            <person name="He X.Y."/>
            <person name="Wang N."/>
            <person name="Zhang X.Y."/>
            <person name="Wang P."/>
            <person name="Chen X.L."/>
            <person name="Zhang Y.Z."/>
            <person name="Ding J.M."/>
            <person name="Li C.Y."/>
        </authorList>
    </citation>
    <scope>FUNCTION IN TMAO TRANSPORT</scope>
    <source>
        <strain>HTCC1062</strain>
    </source>
</reference>
<feature type="chain" id="PRO_0000458084" description="Trimethylamine N-oxide transport system permease protein TmoV">
    <location>
        <begin position="1"/>
        <end position="717"/>
    </location>
</feature>
<feature type="transmembrane region" description="Helical" evidence="1">
    <location>
        <begin position="10"/>
        <end position="30"/>
    </location>
</feature>
<feature type="transmembrane region" description="Helical" evidence="1">
    <location>
        <begin position="69"/>
        <end position="89"/>
    </location>
</feature>
<feature type="transmembrane region" description="Helical" evidence="1">
    <location>
        <begin position="120"/>
        <end position="140"/>
    </location>
</feature>
<feature type="transmembrane region" description="Helical" evidence="1">
    <location>
        <begin position="153"/>
        <end position="173"/>
    </location>
</feature>
<feature type="transmembrane region" description="Helical" evidence="1">
    <location>
        <begin position="175"/>
        <end position="195"/>
    </location>
</feature>
<feature type="transmembrane region" description="Helical" evidence="1">
    <location>
        <begin position="206"/>
        <end position="226"/>
    </location>
</feature>
<feature type="transmembrane region" description="Helical" evidence="1">
    <location>
        <begin position="238"/>
        <end position="258"/>
    </location>
</feature>
<feature type="transmembrane region" description="Helical" evidence="1">
    <location>
        <begin position="265"/>
        <end position="285"/>
    </location>
</feature>
<feature type="transmembrane region" description="Helical" evidence="1">
    <location>
        <begin position="319"/>
        <end position="339"/>
    </location>
</feature>
<feature type="transmembrane region" description="Helical" evidence="1">
    <location>
        <begin position="355"/>
        <end position="375"/>
    </location>
</feature>
<feature type="transmembrane region" description="Helical" evidence="1">
    <location>
        <begin position="402"/>
        <end position="422"/>
    </location>
</feature>
<feature type="transmembrane region" description="Helical" evidence="1">
    <location>
        <begin position="452"/>
        <end position="472"/>
    </location>
</feature>
<feature type="transmembrane region" description="Helical" evidence="1">
    <location>
        <begin position="488"/>
        <end position="508"/>
    </location>
</feature>
<feature type="transmembrane region" description="Helical" evidence="1">
    <location>
        <begin position="527"/>
        <end position="547"/>
    </location>
</feature>
<feature type="transmembrane region" description="Helical" evidence="1">
    <location>
        <begin position="574"/>
        <end position="594"/>
    </location>
</feature>
<feature type="transmembrane region" description="Helical" evidence="1">
    <location>
        <begin position="643"/>
        <end position="663"/>
    </location>
</feature>
<feature type="transmembrane region" description="Helical" evidence="1">
    <location>
        <begin position="683"/>
        <end position="703"/>
    </location>
</feature>
<feature type="domain" description="ABC transmembrane type-1 1" evidence="2">
    <location>
        <begin position="200"/>
        <end position="379"/>
    </location>
</feature>
<feature type="domain" description="ABC transmembrane type-1 2" evidence="2">
    <location>
        <begin position="523"/>
        <end position="703"/>
    </location>
</feature>
<comment type="function">
    <text evidence="3 5">Part of the ABC transporter complex TmoXWV involved in trimethylamine N-oxide (TMAO) import (PubMed:35295296). Responsible for the translocation of the substrate across the membrane (Probable).</text>
</comment>
<comment type="subunit">
    <text evidence="6">The complex is probably composed of two ATP-binding proteins (TmoW), two transmembrane proteins (TmoV) and a solute-binding protein (TmoX).</text>
</comment>
<comment type="subcellular location">
    <subcellularLocation>
        <location evidence="5">Cell inner membrane</location>
        <topology evidence="1">Multi-pass membrane protein</topology>
    </subcellularLocation>
</comment>
<comment type="similarity">
    <text evidence="5">Belongs to the binding-protein-dependent transport system permease family.</text>
</comment>
<keyword id="KW-0997">Cell inner membrane</keyword>
<keyword id="KW-1003">Cell membrane</keyword>
<keyword id="KW-0472">Membrane</keyword>
<keyword id="KW-1185">Reference proteome</keyword>
<keyword id="KW-0677">Repeat</keyword>
<keyword id="KW-0812">Transmembrane</keyword>
<keyword id="KW-1133">Transmembrane helix</keyword>
<keyword id="KW-0813">Transport</keyword>
<name>TMOV_PELUB</name>
<organism>
    <name type="scientific">Pelagibacter ubique (strain HTCC1062)</name>
    <dbReference type="NCBI Taxonomy" id="335992"/>
    <lineage>
        <taxon>Bacteria</taxon>
        <taxon>Pseudomonadati</taxon>
        <taxon>Pseudomonadota</taxon>
        <taxon>Alphaproteobacteria</taxon>
        <taxon>Candidatus Pelagibacterales</taxon>
        <taxon>Candidatus Pelagibacteraceae</taxon>
        <taxon>Candidatus Pelagibacter</taxon>
    </lineage>
</organism>
<dbReference type="EMBL" id="CP000084">
    <property type="protein sequence ID" value="AAZ22100.1"/>
    <property type="molecule type" value="Genomic_DNA"/>
</dbReference>
<dbReference type="RefSeq" id="WP_011282289.1">
    <property type="nucleotide sequence ID" value="NC_007205.1"/>
</dbReference>
<dbReference type="SMR" id="Q4FL38"/>
<dbReference type="STRING" id="335992.SAR11_1297"/>
<dbReference type="GeneID" id="66295787"/>
<dbReference type="KEGG" id="pub:SAR11_1297"/>
<dbReference type="eggNOG" id="COG4176">
    <property type="taxonomic scope" value="Bacteria"/>
</dbReference>
<dbReference type="HOGENOM" id="CLU_023562_0_0_5"/>
<dbReference type="OrthoDB" id="9815258at2"/>
<dbReference type="Proteomes" id="UP000002528">
    <property type="component" value="Chromosome"/>
</dbReference>
<dbReference type="GO" id="GO:0043190">
    <property type="term" value="C:ATP-binding cassette (ABC) transporter complex"/>
    <property type="evidence" value="ECO:0007669"/>
    <property type="project" value="TreeGrafter"/>
</dbReference>
<dbReference type="GO" id="GO:0005275">
    <property type="term" value="F:amine transmembrane transporter activity"/>
    <property type="evidence" value="ECO:0007669"/>
    <property type="project" value="TreeGrafter"/>
</dbReference>
<dbReference type="GO" id="GO:0015226">
    <property type="term" value="F:carnitine transmembrane transporter activity"/>
    <property type="evidence" value="ECO:0007669"/>
    <property type="project" value="TreeGrafter"/>
</dbReference>
<dbReference type="GO" id="GO:0015871">
    <property type="term" value="P:choline transport"/>
    <property type="evidence" value="ECO:0007669"/>
    <property type="project" value="TreeGrafter"/>
</dbReference>
<dbReference type="GO" id="GO:0031460">
    <property type="term" value="P:glycine betaine transport"/>
    <property type="evidence" value="ECO:0007669"/>
    <property type="project" value="TreeGrafter"/>
</dbReference>
<dbReference type="CDD" id="cd06261">
    <property type="entry name" value="TM_PBP2"/>
    <property type="match status" value="2"/>
</dbReference>
<dbReference type="Gene3D" id="1.10.3720.10">
    <property type="entry name" value="MetI-like"/>
    <property type="match status" value="2"/>
</dbReference>
<dbReference type="InterPro" id="IPR000515">
    <property type="entry name" value="MetI-like"/>
</dbReference>
<dbReference type="InterPro" id="IPR035906">
    <property type="entry name" value="MetI-like_sf"/>
</dbReference>
<dbReference type="PANTHER" id="PTHR47737">
    <property type="entry name" value="GLYCINE BETAINE/PROLINE BETAINE TRANSPORT SYSTEM PERMEASE PROTEIN PROW"/>
    <property type="match status" value="1"/>
</dbReference>
<dbReference type="PANTHER" id="PTHR47737:SF1">
    <property type="entry name" value="GLYCINE BETAINE_PROLINE BETAINE TRANSPORT SYSTEM PERMEASE PROTEIN PROW"/>
    <property type="match status" value="1"/>
</dbReference>
<dbReference type="Pfam" id="PF00528">
    <property type="entry name" value="BPD_transp_1"/>
    <property type="match status" value="2"/>
</dbReference>
<dbReference type="SUPFAM" id="SSF161098">
    <property type="entry name" value="MetI-like"/>
    <property type="match status" value="2"/>
</dbReference>
<dbReference type="PROSITE" id="PS50928">
    <property type="entry name" value="ABC_TM1"/>
    <property type="match status" value="2"/>
</dbReference>